<proteinExistence type="inferred from homology"/>
<evidence type="ECO:0000255" key="1">
    <source>
        <dbReference type="HAMAP-Rule" id="MF_00206"/>
    </source>
</evidence>
<evidence type="ECO:0000255" key="2">
    <source>
        <dbReference type="PROSITE-ProRule" id="PRU01266"/>
    </source>
</evidence>
<organism>
    <name type="scientific">Methanocella arvoryzae (strain DSM 22066 / NBRC 105507 / MRE50)</name>
    <dbReference type="NCBI Taxonomy" id="351160"/>
    <lineage>
        <taxon>Archaea</taxon>
        <taxon>Methanobacteriati</taxon>
        <taxon>Methanobacteriota</taxon>
        <taxon>Stenosarchaea group</taxon>
        <taxon>Methanomicrobia</taxon>
        <taxon>Methanocellales</taxon>
        <taxon>Methanocellaceae</taxon>
        <taxon>Methanocella</taxon>
    </lineage>
</organism>
<accession>Q0W150</accession>
<comment type="function">
    <text evidence="1">Catalyzes the radical-mediated insertion of two sulfur atoms into the C-6 and C-8 positions of the octanoyl moiety bound to the lipoyl domains of lipoate-dependent enzymes, thereby converting the octanoylated domains into lipoylated derivatives.</text>
</comment>
<comment type="catalytic activity">
    <reaction evidence="1">
        <text>[[Fe-S] cluster scaffold protein carrying a second [4Fe-4S](2+) cluster] + N(6)-octanoyl-L-lysyl-[protein] + 2 oxidized [2Fe-2S]-[ferredoxin] + 2 S-adenosyl-L-methionine + 4 H(+) = [[Fe-S] cluster scaffold protein] + N(6)-[(R)-dihydrolipoyl]-L-lysyl-[protein] + 4 Fe(3+) + 2 hydrogen sulfide + 2 5'-deoxyadenosine + 2 L-methionine + 2 reduced [2Fe-2S]-[ferredoxin]</text>
        <dbReference type="Rhea" id="RHEA:16585"/>
        <dbReference type="Rhea" id="RHEA-COMP:9928"/>
        <dbReference type="Rhea" id="RHEA-COMP:10000"/>
        <dbReference type="Rhea" id="RHEA-COMP:10001"/>
        <dbReference type="Rhea" id="RHEA-COMP:10475"/>
        <dbReference type="Rhea" id="RHEA-COMP:14568"/>
        <dbReference type="Rhea" id="RHEA-COMP:14569"/>
        <dbReference type="ChEBI" id="CHEBI:15378"/>
        <dbReference type="ChEBI" id="CHEBI:17319"/>
        <dbReference type="ChEBI" id="CHEBI:29034"/>
        <dbReference type="ChEBI" id="CHEBI:29919"/>
        <dbReference type="ChEBI" id="CHEBI:33722"/>
        <dbReference type="ChEBI" id="CHEBI:33737"/>
        <dbReference type="ChEBI" id="CHEBI:33738"/>
        <dbReference type="ChEBI" id="CHEBI:57844"/>
        <dbReference type="ChEBI" id="CHEBI:59789"/>
        <dbReference type="ChEBI" id="CHEBI:78809"/>
        <dbReference type="ChEBI" id="CHEBI:83100"/>
        <dbReference type="EC" id="2.8.1.8"/>
    </reaction>
</comment>
<comment type="cofactor">
    <cofactor evidence="1">
        <name>[4Fe-4S] cluster</name>
        <dbReference type="ChEBI" id="CHEBI:49883"/>
    </cofactor>
    <text evidence="1">Binds 2 [4Fe-4S] clusters per subunit. One cluster is coordinated with 3 cysteines and an exchangeable S-adenosyl-L-methionine.</text>
</comment>
<comment type="pathway">
    <text evidence="1">Protein modification; protein lipoylation via endogenous pathway; protein N(6)-(lipoyl)lysine from octanoyl-[acyl-carrier-protein]: step 2/2.</text>
</comment>
<comment type="subcellular location">
    <subcellularLocation>
        <location evidence="1">Cytoplasm</location>
    </subcellularLocation>
</comment>
<comment type="similarity">
    <text evidence="1">Belongs to the radical SAM superfamily. Lipoyl synthase family.</text>
</comment>
<sequence length="296" mass="33008">MPDPTSPKPDWLKVRLPRTDKYGAVKDVIKKYNLNTVCSSAMCPNAFECWDGGCLTFMVLGNTCTRACRFCTVTHGPAGEPLDSNEPQRLAAAAKELDLSYVVITSVDRDDLPDYGAGHYAACIRAVKEQLPGARVEAIIPDFTGRLDLLEQVVDARPDVISHNIETVERLSPSVRDRRAGYYRSLDVLRDVKRVNPHMLTKSSLLLGMGEEDIEIKEALHDLQEARVDIVTLGQYLRPSIRQWPVHRYVAPGEFSELAEYGRSLGFKYVAAGPFVRTSYRAGEQYVSVIADSRMA</sequence>
<keyword id="KW-0004">4Fe-4S</keyword>
<keyword id="KW-0963">Cytoplasm</keyword>
<keyword id="KW-0408">Iron</keyword>
<keyword id="KW-0411">Iron-sulfur</keyword>
<keyword id="KW-0479">Metal-binding</keyword>
<keyword id="KW-1185">Reference proteome</keyword>
<keyword id="KW-0949">S-adenosyl-L-methionine</keyword>
<keyword id="KW-0808">Transferase</keyword>
<feature type="chain" id="PRO_0000325325" description="Lipoyl synthase">
    <location>
        <begin position="1"/>
        <end position="296"/>
    </location>
</feature>
<feature type="domain" description="Radical SAM core" evidence="2">
    <location>
        <begin position="50"/>
        <end position="268"/>
    </location>
</feature>
<feature type="binding site" evidence="1">
    <location>
        <position position="38"/>
    </location>
    <ligand>
        <name>[4Fe-4S] cluster</name>
        <dbReference type="ChEBI" id="CHEBI:49883"/>
        <label>1</label>
    </ligand>
</feature>
<feature type="binding site" evidence="1">
    <location>
        <position position="43"/>
    </location>
    <ligand>
        <name>[4Fe-4S] cluster</name>
        <dbReference type="ChEBI" id="CHEBI:49883"/>
        <label>1</label>
    </ligand>
</feature>
<feature type="binding site" evidence="1">
    <location>
        <position position="49"/>
    </location>
    <ligand>
        <name>[4Fe-4S] cluster</name>
        <dbReference type="ChEBI" id="CHEBI:49883"/>
        <label>1</label>
    </ligand>
</feature>
<feature type="binding site" evidence="1">
    <location>
        <position position="64"/>
    </location>
    <ligand>
        <name>[4Fe-4S] cluster</name>
        <dbReference type="ChEBI" id="CHEBI:49883"/>
        <label>2</label>
        <note>4Fe-4S-S-AdoMet</note>
    </ligand>
</feature>
<feature type="binding site" evidence="1">
    <location>
        <position position="68"/>
    </location>
    <ligand>
        <name>[4Fe-4S] cluster</name>
        <dbReference type="ChEBI" id="CHEBI:49883"/>
        <label>2</label>
        <note>4Fe-4S-S-AdoMet</note>
    </ligand>
</feature>
<feature type="binding site" evidence="1">
    <location>
        <position position="71"/>
    </location>
    <ligand>
        <name>[4Fe-4S] cluster</name>
        <dbReference type="ChEBI" id="CHEBI:49883"/>
        <label>2</label>
        <note>4Fe-4S-S-AdoMet</note>
    </ligand>
</feature>
<feature type="binding site" evidence="1">
    <location>
        <position position="279"/>
    </location>
    <ligand>
        <name>[4Fe-4S] cluster</name>
        <dbReference type="ChEBI" id="CHEBI:49883"/>
        <label>1</label>
    </ligand>
</feature>
<protein>
    <recommendedName>
        <fullName evidence="1">Lipoyl synthase</fullName>
        <ecNumber evidence="1">2.8.1.8</ecNumber>
    </recommendedName>
    <alternativeName>
        <fullName evidence="1">Lip-syn</fullName>
        <shortName evidence="1">LS</shortName>
    </alternativeName>
    <alternativeName>
        <fullName evidence="1">Lipoate synthase</fullName>
    </alternativeName>
    <alternativeName>
        <fullName evidence="1">Lipoic acid synthase</fullName>
    </alternativeName>
    <alternativeName>
        <fullName evidence="1">Sulfur insertion protein LipA</fullName>
    </alternativeName>
</protein>
<reference key="1">
    <citation type="journal article" date="2006" name="Science">
        <title>Genome of rice cluster I archaea -- the key methane producers in the rice rhizosphere.</title>
        <authorList>
            <person name="Erkel C."/>
            <person name="Kube M."/>
            <person name="Reinhardt R."/>
            <person name="Liesack W."/>
        </authorList>
    </citation>
    <scope>NUCLEOTIDE SEQUENCE [LARGE SCALE GENOMIC DNA]</scope>
    <source>
        <strain>DSM 22066 / NBRC 105507 / MRE50</strain>
    </source>
</reference>
<gene>
    <name evidence="1" type="primary">lipA</name>
    <name type="ordered locus">UNCMA_03690</name>
    <name type="ORF">RRC130</name>
</gene>
<name>LIPA_METAR</name>
<dbReference type="EC" id="2.8.1.8" evidence="1"/>
<dbReference type="EMBL" id="AM114193">
    <property type="protein sequence ID" value="CAJ37893.1"/>
    <property type="molecule type" value="Genomic_DNA"/>
</dbReference>
<dbReference type="RefSeq" id="WP_012034698.1">
    <property type="nucleotide sequence ID" value="NC_009464.1"/>
</dbReference>
<dbReference type="SMR" id="Q0W150"/>
<dbReference type="STRING" id="351160.RRC130"/>
<dbReference type="GeneID" id="5144186"/>
<dbReference type="KEGG" id="rci:RRC130"/>
<dbReference type="PATRIC" id="fig|351160.9.peg.388"/>
<dbReference type="eggNOG" id="arCOG00660">
    <property type="taxonomic scope" value="Archaea"/>
</dbReference>
<dbReference type="OrthoDB" id="145957at2157"/>
<dbReference type="UniPathway" id="UPA00538">
    <property type="reaction ID" value="UER00593"/>
</dbReference>
<dbReference type="Proteomes" id="UP000000663">
    <property type="component" value="Chromosome"/>
</dbReference>
<dbReference type="GO" id="GO:0005737">
    <property type="term" value="C:cytoplasm"/>
    <property type="evidence" value="ECO:0007669"/>
    <property type="project" value="UniProtKB-SubCell"/>
</dbReference>
<dbReference type="GO" id="GO:0051539">
    <property type="term" value="F:4 iron, 4 sulfur cluster binding"/>
    <property type="evidence" value="ECO:0007669"/>
    <property type="project" value="UniProtKB-UniRule"/>
</dbReference>
<dbReference type="GO" id="GO:0016992">
    <property type="term" value="F:lipoate synthase activity"/>
    <property type="evidence" value="ECO:0007669"/>
    <property type="project" value="UniProtKB-UniRule"/>
</dbReference>
<dbReference type="GO" id="GO:0046872">
    <property type="term" value="F:metal ion binding"/>
    <property type="evidence" value="ECO:0007669"/>
    <property type="project" value="UniProtKB-KW"/>
</dbReference>
<dbReference type="CDD" id="cd01335">
    <property type="entry name" value="Radical_SAM"/>
    <property type="match status" value="1"/>
</dbReference>
<dbReference type="Gene3D" id="3.20.20.70">
    <property type="entry name" value="Aldolase class I"/>
    <property type="match status" value="1"/>
</dbReference>
<dbReference type="HAMAP" id="MF_00206">
    <property type="entry name" value="Lipoyl_synth"/>
    <property type="match status" value="1"/>
</dbReference>
<dbReference type="InterPro" id="IPR013785">
    <property type="entry name" value="Aldolase_TIM"/>
</dbReference>
<dbReference type="InterPro" id="IPR006638">
    <property type="entry name" value="Elp3/MiaA/NifB-like_rSAM"/>
</dbReference>
<dbReference type="InterPro" id="IPR003698">
    <property type="entry name" value="Lipoyl_synth"/>
</dbReference>
<dbReference type="InterPro" id="IPR007197">
    <property type="entry name" value="rSAM"/>
</dbReference>
<dbReference type="NCBIfam" id="TIGR00510">
    <property type="entry name" value="lipA"/>
    <property type="match status" value="1"/>
</dbReference>
<dbReference type="NCBIfam" id="NF004019">
    <property type="entry name" value="PRK05481.1"/>
    <property type="match status" value="1"/>
</dbReference>
<dbReference type="NCBIfam" id="NF009544">
    <property type="entry name" value="PRK12928.1"/>
    <property type="match status" value="1"/>
</dbReference>
<dbReference type="PANTHER" id="PTHR10949">
    <property type="entry name" value="LIPOYL SYNTHASE"/>
    <property type="match status" value="1"/>
</dbReference>
<dbReference type="PANTHER" id="PTHR10949:SF0">
    <property type="entry name" value="LIPOYL SYNTHASE, MITOCHONDRIAL"/>
    <property type="match status" value="1"/>
</dbReference>
<dbReference type="Pfam" id="PF04055">
    <property type="entry name" value="Radical_SAM"/>
    <property type="match status" value="1"/>
</dbReference>
<dbReference type="PIRSF" id="PIRSF005963">
    <property type="entry name" value="Lipoyl_synth"/>
    <property type="match status" value="1"/>
</dbReference>
<dbReference type="SFLD" id="SFLDF00271">
    <property type="entry name" value="lipoyl_synthase"/>
    <property type="match status" value="1"/>
</dbReference>
<dbReference type="SFLD" id="SFLDS00029">
    <property type="entry name" value="Radical_SAM"/>
    <property type="match status" value="1"/>
</dbReference>
<dbReference type="SMART" id="SM00729">
    <property type="entry name" value="Elp3"/>
    <property type="match status" value="1"/>
</dbReference>
<dbReference type="SUPFAM" id="SSF102114">
    <property type="entry name" value="Radical SAM enzymes"/>
    <property type="match status" value="1"/>
</dbReference>
<dbReference type="PROSITE" id="PS51918">
    <property type="entry name" value="RADICAL_SAM"/>
    <property type="match status" value="1"/>
</dbReference>